<protein>
    <recommendedName>
        <fullName evidence="1">Transcriptional repressor NrdR</fullName>
    </recommendedName>
</protein>
<proteinExistence type="inferred from homology"/>
<comment type="function">
    <text evidence="1">Negatively regulates transcription of bacterial ribonucleotide reductase nrd genes and operons by binding to NrdR-boxes.</text>
</comment>
<comment type="cofactor">
    <cofactor evidence="1">
        <name>Zn(2+)</name>
        <dbReference type="ChEBI" id="CHEBI:29105"/>
    </cofactor>
    <text evidence="1">Binds 1 zinc ion.</text>
</comment>
<comment type="similarity">
    <text evidence="1">Belongs to the NrdR family.</text>
</comment>
<keyword id="KW-0067">ATP-binding</keyword>
<keyword id="KW-0238">DNA-binding</keyword>
<keyword id="KW-0479">Metal-binding</keyword>
<keyword id="KW-0547">Nucleotide-binding</keyword>
<keyword id="KW-0678">Repressor</keyword>
<keyword id="KW-0804">Transcription</keyword>
<keyword id="KW-0805">Transcription regulation</keyword>
<keyword id="KW-0862">Zinc</keyword>
<keyword id="KW-0863">Zinc-finger</keyword>
<name>NRDR_ECOBW</name>
<organism>
    <name type="scientific">Escherichia coli (strain K12 / MC4100 / BW2952)</name>
    <dbReference type="NCBI Taxonomy" id="595496"/>
    <lineage>
        <taxon>Bacteria</taxon>
        <taxon>Pseudomonadati</taxon>
        <taxon>Pseudomonadota</taxon>
        <taxon>Gammaproteobacteria</taxon>
        <taxon>Enterobacterales</taxon>
        <taxon>Enterobacteriaceae</taxon>
        <taxon>Escherichia</taxon>
    </lineage>
</organism>
<accession>C4ZTH0</accession>
<sequence>MHCPFCFAVDTKVIDSRLVGEGSSVRRRRQCLVCNERFTTFEVAELVMPRVVKSNDVREPFNEEKLRSGMLRALEKRPVSSDDVEMAINHIKSQLRATGEREVPSKMIGNLVMEQLKKLDKVAYIRFASVYRSFEDIKEFGEEIARLED</sequence>
<reference key="1">
    <citation type="journal article" date="2009" name="J. Bacteriol.">
        <title>Genomic sequencing reveals regulatory mutations and recombinational events in the widely used MC4100 lineage of Escherichia coli K-12.</title>
        <authorList>
            <person name="Ferenci T."/>
            <person name="Zhou Z."/>
            <person name="Betteridge T."/>
            <person name="Ren Y."/>
            <person name="Liu Y."/>
            <person name="Feng L."/>
            <person name="Reeves P.R."/>
            <person name="Wang L."/>
        </authorList>
    </citation>
    <scope>NUCLEOTIDE SEQUENCE [LARGE SCALE GENOMIC DNA]</scope>
    <source>
        <strain>K12 / MC4100 / BW2952</strain>
    </source>
</reference>
<evidence type="ECO:0000255" key="1">
    <source>
        <dbReference type="HAMAP-Rule" id="MF_00440"/>
    </source>
</evidence>
<dbReference type="EMBL" id="CP001396">
    <property type="protein sequence ID" value="ACR62436.1"/>
    <property type="molecule type" value="Genomic_DNA"/>
</dbReference>
<dbReference type="RefSeq" id="WP_000543535.1">
    <property type="nucleotide sequence ID" value="NC_012759.1"/>
</dbReference>
<dbReference type="SMR" id="C4ZTH0"/>
<dbReference type="GeneID" id="93777047"/>
<dbReference type="KEGG" id="ebw:BWG_0295"/>
<dbReference type="HOGENOM" id="CLU_108412_0_0_6"/>
<dbReference type="GO" id="GO:0005524">
    <property type="term" value="F:ATP binding"/>
    <property type="evidence" value="ECO:0007669"/>
    <property type="project" value="UniProtKB-KW"/>
</dbReference>
<dbReference type="GO" id="GO:0003677">
    <property type="term" value="F:DNA binding"/>
    <property type="evidence" value="ECO:0007669"/>
    <property type="project" value="UniProtKB-KW"/>
</dbReference>
<dbReference type="GO" id="GO:0008270">
    <property type="term" value="F:zinc ion binding"/>
    <property type="evidence" value="ECO:0007669"/>
    <property type="project" value="UniProtKB-UniRule"/>
</dbReference>
<dbReference type="GO" id="GO:0045892">
    <property type="term" value="P:negative regulation of DNA-templated transcription"/>
    <property type="evidence" value="ECO:0007669"/>
    <property type="project" value="UniProtKB-UniRule"/>
</dbReference>
<dbReference type="HAMAP" id="MF_00440">
    <property type="entry name" value="NrdR"/>
    <property type="match status" value="1"/>
</dbReference>
<dbReference type="InterPro" id="IPR005144">
    <property type="entry name" value="ATP-cone_dom"/>
</dbReference>
<dbReference type="InterPro" id="IPR055173">
    <property type="entry name" value="NrdR-like_N"/>
</dbReference>
<dbReference type="InterPro" id="IPR003796">
    <property type="entry name" value="RNR_NrdR-like"/>
</dbReference>
<dbReference type="NCBIfam" id="TIGR00244">
    <property type="entry name" value="transcriptional regulator NrdR"/>
    <property type="match status" value="1"/>
</dbReference>
<dbReference type="PANTHER" id="PTHR30455">
    <property type="entry name" value="TRANSCRIPTIONAL REPRESSOR NRDR"/>
    <property type="match status" value="1"/>
</dbReference>
<dbReference type="PANTHER" id="PTHR30455:SF2">
    <property type="entry name" value="TRANSCRIPTIONAL REPRESSOR NRDR"/>
    <property type="match status" value="1"/>
</dbReference>
<dbReference type="Pfam" id="PF03477">
    <property type="entry name" value="ATP-cone"/>
    <property type="match status" value="1"/>
</dbReference>
<dbReference type="Pfam" id="PF22811">
    <property type="entry name" value="Zn_ribbon_NrdR"/>
    <property type="match status" value="1"/>
</dbReference>
<dbReference type="PROSITE" id="PS51161">
    <property type="entry name" value="ATP_CONE"/>
    <property type="match status" value="1"/>
</dbReference>
<gene>
    <name evidence="1" type="primary">nrdR</name>
    <name type="ordered locus">BWG_0295</name>
</gene>
<feature type="chain" id="PRO_1000206114" description="Transcriptional repressor NrdR">
    <location>
        <begin position="1"/>
        <end position="149"/>
    </location>
</feature>
<feature type="domain" description="ATP-cone" evidence="1">
    <location>
        <begin position="49"/>
        <end position="139"/>
    </location>
</feature>
<feature type="zinc finger region" evidence="1">
    <location>
        <begin position="3"/>
        <end position="34"/>
    </location>
</feature>